<name>DCTA_SALPB</name>
<accession>A9MUP5</accession>
<evidence type="ECO:0000255" key="1">
    <source>
        <dbReference type="HAMAP-Rule" id="MF_01300"/>
    </source>
</evidence>
<sequence>MKTSLFKSLYFQVLTAIAIGILLGHYYPELGAQMKPLGDAFVKLIKMIIAPVIFCTVVTGIAGMESMKAVGRTGAVALLYFEIVSTIALIIGLIIVNVVQPGAGMNVDPATLDAQAVAVYAAQAKEQGIIAFLMDVIPGSVIGAFASGNILQVLLFAVLFGFALHRLGSKGQLIFNVIESFSQVIFGIINMIMRLAPIGAFGAMAFTIGKYGVGSLVQLGQLIICFYITCILFVVVVLGTIARVTGFSIFKFIRYIREELLIVLGTSSSESALPRMLDKMEKLGCRKSVVGLVIPTGYSFNLDGTSIYLTMAAVFIAQATNSHMDIFHQITLLVVLLLSSKGAAGVTGSGFIVLAATISAVGHLPVAGLALILGIDRFMSEARALTNLVGNGVATVVVAKWVKELDHQKLDDVLNNRAPDGKTHEISS</sequence>
<organism>
    <name type="scientific">Salmonella paratyphi B (strain ATCC BAA-1250 / SPB7)</name>
    <dbReference type="NCBI Taxonomy" id="1016998"/>
    <lineage>
        <taxon>Bacteria</taxon>
        <taxon>Pseudomonadati</taxon>
        <taxon>Pseudomonadota</taxon>
        <taxon>Gammaproteobacteria</taxon>
        <taxon>Enterobacterales</taxon>
        <taxon>Enterobacteriaceae</taxon>
        <taxon>Salmonella</taxon>
    </lineage>
</organism>
<feature type="chain" id="PRO_1000085905" description="C4-dicarboxylate transport protein">
    <location>
        <begin position="1"/>
        <end position="428"/>
    </location>
</feature>
<feature type="transmembrane region" description="Helical" evidence="1">
    <location>
        <begin position="4"/>
        <end position="24"/>
    </location>
</feature>
<feature type="transmembrane region" description="Helical" evidence="1">
    <location>
        <begin position="44"/>
        <end position="64"/>
    </location>
</feature>
<feature type="transmembrane region" description="Helical" evidence="1">
    <location>
        <begin position="76"/>
        <end position="96"/>
    </location>
</feature>
<feature type="transmembrane region" description="Helical" evidence="1">
    <location>
        <begin position="142"/>
        <end position="162"/>
    </location>
</feature>
<feature type="transmembrane region" description="Helical" evidence="1">
    <location>
        <begin position="184"/>
        <end position="204"/>
    </location>
</feature>
<feature type="transmembrane region" description="Helical" evidence="1">
    <location>
        <begin position="222"/>
        <end position="242"/>
    </location>
</feature>
<feature type="transmembrane region" description="Helical" evidence="1">
    <location>
        <begin position="289"/>
        <end position="309"/>
    </location>
</feature>
<feature type="transmembrane region" description="Helical" evidence="1">
    <location>
        <begin position="326"/>
        <end position="346"/>
    </location>
</feature>
<feature type="transmembrane region" description="Helical" evidence="1">
    <location>
        <begin position="352"/>
        <end position="372"/>
    </location>
</feature>
<dbReference type="EMBL" id="CP000886">
    <property type="protein sequence ID" value="ABX69805.1"/>
    <property type="molecule type" value="Genomic_DNA"/>
</dbReference>
<dbReference type="RefSeq" id="WP_000858228.1">
    <property type="nucleotide sequence ID" value="NC_010102.1"/>
</dbReference>
<dbReference type="SMR" id="A9MUP5"/>
<dbReference type="KEGG" id="spq:SPAB_04490"/>
<dbReference type="PATRIC" id="fig|1016998.12.peg.4223"/>
<dbReference type="HOGENOM" id="CLU_019375_7_0_6"/>
<dbReference type="BioCyc" id="SENT1016998:SPAB_RS18260-MONOMER"/>
<dbReference type="Proteomes" id="UP000008556">
    <property type="component" value="Chromosome"/>
</dbReference>
<dbReference type="GO" id="GO:0005886">
    <property type="term" value="C:plasma membrane"/>
    <property type="evidence" value="ECO:0007669"/>
    <property type="project" value="UniProtKB-SubCell"/>
</dbReference>
<dbReference type="GO" id="GO:0015138">
    <property type="term" value="F:fumarate transmembrane transporter activity"/>
    <property type="evidence" value="ECO:0007669"/>
    <property type="project" value="TreeGrafter"/>
</dbReference>
<dbReference type="GO" id="GO:0015366">
    <property type="term" value="F:malate:proton symporter activity"/>
    <property type="evidence" value="ECO:0007669"/>
    <property type="project" value="TreeGrafter"/>
</dbReference>
<dbReference type="GO" id="GO:0015141">
    <property type="term" value="F:succinate transmembrane transporter activity"/>
    <property type="evidence" value="ECO:0007669"/>
    <property type="project" value="TreeGrafter"/>
</dbReference>
<dbReference type="GO" id="GO:0070778">
    <property type="term" value="P:L-aspartate transmembrane transport"/>
    <property type="evidence" value="ECO:0007669"/>
    <property type="project" value="TreeGrafter"/>
</dbReference>
<dbReference type="FunFam" id="1.10.3860.10:FF:000001">
    <property type="entry name" value="C4-dicarboxylate transport protein"/>
    <property type="match status" value="1"/>
</dbReference>
<dbReference type="Gene3D" id="1.10.3860.10">
    <property type="entry name" value="Sodium:dicarboxylate symporter"/>
    <property type="match status" value="1"/>
</dbReference>
<dbReference type="HAMAP" id="MF_01300">
    <property type="entry name" value="C4_dicarb_transport"/>
    <property type="match status" value="1"/>
</dbReference>
<dbReference type="InterPro" id="IPR023954">
    <property type="entry name" value="C4_dicarb_transport"/>
</dbReference>
<dbReference type="InterPro" id="IPR001991">
    <property type="entry name" value="Na-dicarboxylate_symporter"/>
</dbReference>
<dbReference type="InterPro" id="IPR018107">
    <property type="entry name" value="Na-dicarboxylate_symporter_CS"/>
</dbReference>
<dbReference type="InterPro" id="IPR036458">
    <property type="entry name" value="Na:dicarbo_symporter_sf"/>
</dbReference>
<dbReference type="NCBIfam" id="NF002461">
    <property type="entry name" value="PRK01663.1"/>
    <property type="match status" value="1"/>
</dbReference>
<dbReference type="NCBIfam" id="NF009587">
    <property type="entry name" value="PRK13027.1"/>
    <property type="match status" value="1"/>
</dbReference>
<dbReference type="PANTHER" id="PTHR42865:SF1">
    <property type="entry name" value="AEROBIC C4-DICARBOXYLATE TRANSPORT PROTEIN"/>
    <property type="match status" value="1"/>
</dbReference>
<dbReference type="PANTHER" id="PTHR42865">
    <property type="entry name" value="PROTON/GLUTAMATE-ASPARTATE SYMPORTER"/>
    <property type="match status" value="1"/>
</dbReference>
<dbReference type="Pfam" id="PF00375">
    <property type="entry name" value="SDF"/>
    <property type="match status" value="1"/>
</dbReference>
<dbReference type="PRINTS" id="PR00173">
    <property type="entry name" value="EDTRNSPORT"/>
</dbReference>
<dbReference type="SUPFAM" id="SSF118215">
    <property type="entry name" value="Proton glutamate symport protein"/>
    <property type="match status" value="1"/>
</dbReference>
<dbReference type="PROSITE" id="PS00713">
    <property type="entry name" value="NA_DICARBOXYL_SYMP_1"/>
    <property type="match status" value="1"/>
</dbReference>
<dbReference type="PROSITE" id="PS00714">
    <property type="entry name" value="NA_DICARBOXYL_SYMP_2"/>
    <property type="match status" value="1"/>
</dbReference>
<gene>
    <name evidence="1" type="primary">dctA</name>
    <name type="ordered locus">SPAB_04490</name>
</gene>
<reference key="1">
    <citation type="submission" date="2007-11" db="EMBL/GenBank/DDBJ databases">
        <authorList>
            <consortium name="The Salmonella enterica serovar Paratyphi B Genome Sequencing Project"/>
            <person name="McClelland M."/>
            <person name="Sanderson E.K."/>
            <person name="Porwollik S."/>
            <person name="Spieth J."/>
            <person name="Clifton W.S."/>
            <person name="Fulton R."/>
            <person name="Cordes M."/>
            <person name="Wollam A."/>
            <person name="Shah N."/>
            <person name="Pepin K."/>
            <person name="Bhonagiri V."/>
            <person name="Nash W."/>
            <person name="Johnson M."/>
            <person name="Thiruvilangam P."/>
            <person name="Wilson R."/>
        </authorList>
    </citation>
    <scope>NUCLEOTIDE SEQUENCE [LARGE SCALE GENOMIC DNA]</scope>
    <source>
        <strain>ATCC BAA-1250 / SPB7</strain>
    </source>
</reference>
<comment type="function">
    <text evidence="1">Responsible for the transport of dicarboxylates such as succinate, fumarate, and malate from the periplasm across the membrane.</text>
</comment>
<comment type="subcellular location">
    <subcellularLocation>
        <location evidence="1">Cell inner membrane</location>
        <topology evidence="1">Multi-pass membrane protein</topology>
    </subcellularLocation>
</comment>
<comment type="similarity">
    <text evidence="1">Belongs to the dicarboxylate/amino acid:cation symporter (DAACS) (TC 2.A.23) family.</text>
</comment>
<keyword id="KW-0997">Cell inner membrane</keyword>
<keyword id="KW-1003">Cell membrane</keyword>
<keyword id="KW-0472">Membrane</keyword>
<keyword id="KW-0769">Symport</keyword>
<keyword id="KW-0812">Transmembrane</keyword>
<keyword id="KW-1133">Transmembrane helix</keyword>
<keyword id="KW-0813">Transport</keyword>
<proteinExistence type="inferred from homology"/>
<protein>
    <recommendedName>
        <fullName evidence="1">C4-dicarboxylate transport protein</fullName>
    </recommendedName>
</protein>